<evidence type="ECO:0000250" key="1">
    <source>
        <dbReference type="UniProtKB" id="P53075"/>
    </source>
</evidence>
<evidence type="ECO:0000255" key="2"/>
<evidence type="ECO:0000256" key="3">
    <source>
        <dbReference type="SAM" id="MobiDB-lite"/>
    </source>
</evidence>
<evidence type="ECO:0000305" key="4"/>
<comment type="function">
    <text evidence="1">Involved in spore wall assembly. May be a component of the mitochondrial RNase MRP (MtMRP), a ribonucleoprotein endoribonuclease involved in the cleaving RNA transcripts to generate primers for DNA replication in mitochondria.</text>
</comment>
<comment type="subunit">
    <text evidence="1">Component of the mitochondria-localized RNase mitochondrial RNA-processing (RNase MRP) composed of one single RNA encoded by the NME1 gene and at least 31 proteins. Absent in the nucleus-localized RNase MRP (NuMRP).</text>
</comment>
<comment type="subcellular location">
    <subcellularLocation>
        <location evidence="1">Mitochondrion</location>
    </subcellularLocation>
</comment>
<comment type="similarity">
    <text evidence="4">Belongs to the SHE10 family.</text>
</comment>
<organism>
    <name type="scientific">Saccharomyces cerevisiae (strain YJM789)</name>
    <name type="common">Baker's yeast</name>
    <dbReference type="NCBI Taxonomy" id="307796"/>
    <lineage>
        <taxon>Eukaryota</taxon>
        <taxon>Fungi</taxon>
        <taxon>Dikarya</taxon>
        <taxon>Ascomycota</taxon>
        <taxon>Saccharomycotina</taxon>
        <taxon>Saccharomycetes</taxon>
        <taxon>Saccharomycetales</taxon>
        <taxon>Saccharomycetaceae</taxon>
        <taxon>Saccharomyces</taxon>
    </lineage>
</organism>
<protein>
    <recommendedName>
        <fullName evidence="1">Outer spore wall assembly protein SHE10</fullName>
    </recommendedName>
    <alternativeName>
        <fullName evidence="1">Sensitivity to high expression protein 10</fullName>
    </alternativeName>
</protein>
<sequence>MGKLIKLITTLTVLVSLLQYCCEFNSGSISCERTQTLCHYTNPRVWNTYFSRNCELYKNKVSPGFDIVARKYDTAVKPVIDDATVKVNKVAIQPAFKVIHSQCKKWNCGKYYQLVRSPMVKTRRFFFAKYNAFVKPNLDKFFTAEFRSHLKERILKYKNIGHYYFTITSRCIKSKYDFIVGNTEEKLMGKFKNKDTHGIHGSVTREPSSEDMVLTVSTMESDEEELTTTSTQTVVETITLDQEEASAVANHAHDDEASTDVEGSTDVNVNEQALLQEDFDMWSETILQKTQDVIQLFEKDVSKYINGKLVEEANHFKAKFQSLDDKSKKFFSKISLAINDIECVEGIDSETGKKIFFDKSGSTEISQYITRELVREYFNETRSTLDELTNAMEKDLSEITDEIEKKVNAIREENVEVFEEWGDIIVNEWSKRMAYVDVINAHMGADDDTTLDEEKAKSSVNWKKFLKGKKQIIESRDKLAHHSADLSRVNAFRQKVQKKILSFTQESGEFLYILRSKANLQFQERERKERERKEREKAAAEEFQRQQELLRQQEEEDEEDVSYTSTSTITTTTTMTL</sequence>
<accession>A6ZTW2</accession>
<proteinExistence type="inferred from homology"/>
<name>SHE10_YEAS7</name>
<dbReference type="EMBL" id="AAFW02000099">
    <property type="protein sequence ID" value="EDN61900.1"/>
    <property type="molecule type" value="Genomic_DNA"/>
</dbReference>
<dbReference type="SMR" id="A6ZTW2"/>
<dbReference type="HOGENOM" id="CLU_023952_1_0_1"/>
<dbReference type="Proteomes" id="UP000007060">
    <property type="component" value="Unassembled WGS sequence"/>
</dbReference>
<dbReference type="GO" id="GO:0005739">
    <property type="term" value="C:mitochondrion"/>
    <property type="evidence" value="ECO:0007669"/>
    <property type="project" value="UniProtKB-SubCell"/>
</dbReference>
<dbReference type="GO" id="GO:1990904">
    <property type="term" value="C:ribonucleoprotein complex"/>
    <property type="evidence" value="ECO:0007669"/>
    <property type="project" value="UniProtKB-KW"/>
</dbReference>
<dbReference type="GO" id="GO:0030435">
    <property type="term" value="P:sporulation resulting in formation of a cellular spore"/>
    <property type="evidence" value="ECO:0007669"/>
    <property type="project" value="UniProtKB-KW"/>
</dbReference>
<reference key="1">
    <citation type="journal article" date="2007" name="Proc. Natl. Acad. Sci. U.S.A.">
        <title>Genome sequencing and comparative analysis of Saccharomyces cerevisiae strain YJM789.</title>
        <authorList>
            <person name="Wei W."/>
            <person name="McCusker J.H."/>
            <person name="Hyman R.W."/>
            <person name="Jones T."/>
            <person name="Ning Y."/>
            <person name="Cao Z."/>
            <person name="Gu Z."/>
            <person name="Bruno D."/>
            <person name="Miranda M."/>
            <person name="Nguyen M."/>
            <person name="Wilhelmy J."/>
            <person name="Komp C."/>
            <person name="Tamse R."/>
            <person name="Wang X."/>
            <person name="Jia P."/>
            <person name="Luedi P."/>
            <person name="Oefner P.J."/>
            <person name="David L."/>
            <person name="Dietrich F.S."/>
            <person name="Li Y."/>
            <person name="Davis R.W."/>
            <person name="Steinmetz L.M."/>
        </authorList>
    </citation>
    <scope>NUCLEOTIDE SEQUENCE [LARGE SCALE GENOMIC DNA]</scope>
    <source>
        <strain>YJM789</strain>
    </source>
</reference>
<gene>
    <name evidence="1" type="primary">SHE10</name>
    <name type="ORF">SCY_1845</name>
</gene>
<keyword id="KW-0175">Coiled coil</keyword>
<keyword id="KW-0496">Mitochondrion</keyword>
<keyword id="KW-0687">Ribonucleoprotein</keyword>
<keyword id="KW-0732">Signal</keyword>
<keyword id="KW-0749">Sporulation</keyword>
<feature type="signal peptide" evidence="2">
    <location>
        <begin position="1"/>
        <end position="23"/>
    </location>
</feature>
<feature type="chain" id="PRO_0000408913" description="Outer spore wall assembly protein SHE10">
    <location>
        <begin position="24"/>
        <end position="577"/>
    </location>
</feature>
<feature type="region of interest" description="Disordered" evidence="3">
    <location>
        <begin position="525"/>
        <end position="577"/>
    </location>
</feature>
<feature type="coiled-coil region" evidence="2">
    <location>
        <begin position="379"/>
        <end position="416"/>
    </location>
</feature>
<feature type="coiled-coil region" evidence="2">
    <location>
        <begin position="513"/>
        <end position="561"/>
    </location>
</feature>
<feature type="compositionally biased region" description="Basic and acidic residues" evidence="3">
    <location>
        <begin position="525"/>
        <end position="545"/>
    </location>
</feature>
<feature type="compositionally biased region" description="Low complexity" evidence="3">
    <location>
        <begin position="562"/>
        <end position="577"/>
    </location>
</feature>